<organism>
    <name type="scientific">Escherichia coli O7:K1 (strain IAI39 / ExPEC)</name>
    <dbReference type="NCBI Taxonomy" id="585057"/>
    <lineage>
        <taxon>Bacteria</taxon>
        <taxon>Pseudomonadati</taxon>
        <taxon>Pseudomonadota</taxon>
        <taxon>Gammaproteobacteria</taxon>
        <taxon>Enterobacterales</taxon>
        <taxon>Enterobacteriaceae</taxon>
        <taxon>Escherichia</taxon>
    </lineage>
</organism>
<accession>B7NNV8</accession>
<comment type="function">
    <text evidence="1">NDH-1 shuttles electrons from NADH, via FMN and iron-sulfur (Fe-S) centers, to quinones in the respiratory chain. The immediate electron acceptor for the enzyme in this species is believed to be ubiquinone. Couples the redox reaction to proton translocation (for every two electrons transferred, four hydrogen ions are translocated across the cytoplasmic membrane), and thus conserves the redox energy in a proton gradient.</text>
</comment>
<comment type="catalytic activity">
    <reaction evidence="1">
        <text>a quinone + NADH + 5 H(+)(in) = a quinol + NAD(+) + 4 H(+)(out)</text>
        <dbReference type="Rhea" id="RHEA:57888"/>
        <dbReference type="ChEBI" id="CHEBI:15378"/>
        <dbReference type="ChEBI" id="CHEBI:24646"/>
        <dbReference type="ChEBI" id="CHEBI:57540"/>
        <dbReference type="ChEBI" id="CHEBI:57945"/>
        <dbReference type="ChEBI" id="CHEBI:132124"/>
    </reaction>
</comment>
<comment type="subunit">
    <text evidence="1">NDH-1 is composed of 13 different subunits. Subunits NuoA, H, J, K, L, M, N constitute the membrane sector of the complex.</text>
</comment>
<comment type="subcellular location">
    <subcellularLocation>
        <location evidence="1">Cell inner membrane</location>
        <topology evidence="1">Multi-pass membrane protein</topology>
    </subcellularLocation>
</comment>
<comment type="similarity">
    <text evidence="1">Belongs to the complex I subunit 4L family.</text>
</comment>
<gene>
    <name evidence="1" type="primary">nuoK</name>
    <name type="ordered locus">ECIAI39_2426</name>
</gene>
<protein>
    <recommendedName>
        <fullName evidence="1">NADH-quinone oxidoreductase subunit K</fullName>
        <ecNumber evidence="1">7.1.1.-</ecNumber>
    </recommendedName>
    <alternativeName>
        <fullName evidence="1">NADH dehydrogenase I subunit K</fullName>
    </alternativeName>
    <alternativeName>
        <fullName evidence="1">NDH-1 subunit K</fullName>
    </alternativeName>
</protein>
<reference key="1">
    <citation type="journal article" date="2009" name="PLoS Genet.">
        <title>Organised genome dynamics in the Escherichia coli species results in highly diverse adaptive paths.</title>
        <authorList>
            <person name="Touchon M."/>
            <person name="Hoede C."/>
            <person name="Tenaillon O."/>
            <person name="Barbe V."/>
            <person name="Baeriswyl S."/>
            <person name="Bidet P."/>
            <person name="Bingen E."/>
            <person name="Bonacorsi S."/>
            <person name="Bouchier C."/>
            <person name="Bouvet O."/>
            <person name="Calteau A."/>
            <person name="Chiapello H."/>
            <person name="Clermont O."/>
            <person name="Cruveiller S."/>
            <person name="Danchin A."/>
            <person name="Diard M."/>
            <person name="Dossat C."/>
            <person name="Karoui M.E."/>
            <person name="Frapy E."/>
            <person name="Garry L."/>
            <person name="Ghigo J.M."/>
            <person name="Gilles A.M."/>
            <person name="Johnson J."/>
            <person name="Le Bouguenec C."/>
            <person name="Lescat M."/>
            <person name="Mangenot S."/>
            <person name="Martinez-Jehanne V."/>
            <person name="Matic I."/>
            <person name="Nassif X."/>
            <person name="Oztas S."/>
            <person name="Petit M.A."/>
            <person name="Pichon C."/>
            <person name="Rouy Z."/>
            <person name="Ruf C.S."/>
            <person name="Schneider D."/>
            <person name="Tourret J."/>
            <person name="Vacherie B."/>
            <person name="Vallenet D."/>
            <person name="Medigue C."/>
            <person name="Rocha E.P.C."/>
            <person name="Denamur E."/>
        </authorList>
    </citation>
    <scope>NUCLEOTIDE SEQUENCE [LARGE SCALE GENOMIC DNA]</scope>
    <source>
        <strain>IAI39 / ExPEC</strain>
    </source>
</reference>
<proteinExistence type="inferred from homology"/>
<evidence type="ECO:0000255" key="1">
    <source>
        <dbReference type="HAMAP-Rule" id="MF_01456"/>
    </source>
</evidence>
<keyword id="KW-0997">Cell inner membrane</keyword>
<keyword id="KW-1003">Cell membrane</keyword>
<keyword id="KW-0472">Membrane</keyword>
<keyword id="KW-0520">NAD</keyword>
<keyword id="KW-0874">Quinone</keyword>
<keyword id="KW-1278">Translocase</keyword>
<keyword id="KW-0812">Transmembrane</keyword>
<keyword id="KW-1133">Transmembrane helix</keyword>
<keyword id="KW-0813">Transport</keyword>
<keyword id="KW-0830">Ubiquinone</keyword>
<feature type="chain" id="PRO_0000390056" description="NADH-quinone oxidoreductase subunit K">
    <location>
        <begin position="1"/>
        <end position="100"/>
    </location>
</feature>
<feature type="transmembrane region" description="Helical" evidence="1">
    <location>
        <begin position="4"/>
        <end position="24"/>
    </location>
</feature>
<feature type="transmembrane region" description="Helical" evidence="1">
    <location>
        <begin position="28"/>
        <end position="48"/>
    </location>
</feature>
<feature type="transmembrane region" description="Helical" evidence="1">
    <location>
        <begin position="60"/>
        <end position="80"/>
    </location>
</feature>
<sequence>MIPLQHGLILAAILFVLGLTGLVIRRNLLFMLIGLEIMINASALAFVVAGSYWGQTDGQVMYILAISLAAAEASIGLALLLQLHRRRQNLNIDSVSEMRG</sequence>
<name>NUOK_ECO7I</name>
<dbReference type="EC" id="7.1.1.-" evidence="1"/>
<dbReference type="EMBL" id="CU928164">
    <property type="protein sequence ID" value="CAR18552.1"/>
    <property type="molecule type" value="Genomic_DNA"/>
</dbReference>
<dbReference type="RefSeq" id="WP_000612644.1">
    <property type="nucleotide sequence ID" value="NC_011750.1"/>
</dbReference>
<dbReference type="RefSeq" id="YP_002408382.1">
    <property type="nucleotide sequence ID" value="NC_011750.1"/>
</dbReference>
<dbReference type="SMR" id="B7NNV8"/>
<dbReference type="STRING" id="585057.ECIAI39_2426"/>
<dbReference type="GeneID" id="93033872"/>
<dbReference type="KEGG" id="ect:ECIAI39_2426"/>
<dbReference type="PATRIC" id="fig|585057.6.peg.2528"/>
<dbReference type="HOGENOM" id="CLU_144724_0_1_6"/>
<dbReference type="Proteomes" id="UP000000749">
    <property type="component" value="Chromosome"/>
</dbReference>
<dbReference type="GO" id="GO:0030964">
    <property type="term" value="C:NADH dehydrogenase complex"/>
    <property type="evidence" value="ECO:0007669"/>
    <property type="project" value="TreeGrafter"/>
</dbReference>
<dbReference type="GO" id="GO:0005886">
    <property type="term" value="C:plasma membrane"/>
    <property type="evidence" value="ECO:0007669"/>
    <property type="project" value="UniProtKB-SubCell"/>
</dbReference>
<dbReference type="GO" id="GO:0050136">
    <property type="term" value="F:NADH:ubiquinone reductase (non-electrogenic) activity"/>
    <property type="evidence" value="ECO:0007669"/>
    <property type="project" value="UniProtKB-UniRule"/>
</dbReference>
<dbReference type="GO" id="GO:0048038">
    <property type="term" value="F:quinone binding"/>
    <property type="evidence" value="ECO:0007669"/>
    <property type="project" value="UniProtKB-KW"/>
</dbReference>
<dbReference type="GO" id="GO:0042773">
    <property type="term" value="P:ATP synthesis coupled electron transport"/>
    <property type="evidence" value="ECO:0007669"/>
    <property type="project" value="InterPro"/>
</dbReference>
<dbReference type="FunFam" id="1.10.287.3510:FF:000001">
    <property type="entry name" value="NADH-quinone oxidoreductase subunit K"/>
    <property type="match status" value="1"/>
</dbReference>
<dbReference type="Gene3D" id="1.10.287.3510">
    <property type="match status" value="1"/>
</dbReference>
<dbReference type="HAMAP" id="MF_01456">
    <property type="entry name" value="NDH1_NuoK"/>
    <property type="match status" value="1"/>
</dbReference>
<dbReference type="InterPro" id="IPR001133">
    <property type="entry name" value="NADH_UbQ_OxRdtase_chain4L/K"/>
</dbReference>
<dbReference type="InterPro" id="IPR039428">
    <property type="entry name" value="NUOK/Mnh_C1-like"/>
</dbReference>
<dbReference type="NCBIfam" id="NF004319">
    <property type="entry name" value="PRK05715.1-1"/>
    <property type="match status" value="1"/>
</dbReference>
<dbReference type="NCBIfam" id="NF004320">
    <property type="entry name" value="PRK05715.1-2"/>
    <property type="match status" value="1"/>
</dbReference>
<dbReference type="PANTHER" id="PTHR11434:SF16">
    <property type="entry name" value="NADH-UBIQUINONE OXIDOREDUCTASE CHAIN 4L"/>
    <property type="match status" value="1"/>
</dbReference>
<dbReference type="PANTHER" id="PTHR11434">
    <property type="entry name" value="NADH-UBIQUINONE OXIDOREDUCTASE SUBUNIT ND4L"/>
    <property type="match status" value="1"/>
</dbReference>
<dbReference type="Pfam" id="PF00420">
    <property type="entry name" value="Oxidored_q2"/>
    <property type="match status" value="1"/>
</dbReference>